<sequence length="340" mass="35779">MPSIRLADLAQQLDAQVHGDGDLVITGIASMHSAQPEQITFLSNSRYREQLASCNAGAVVLTEADLPFCKVAALVVENPYFTYARMAQIMDTTPQPAQDIAPSAVISPQATLGEGVSVGANAVIESGVVLGDNVVIGAGCFIGKNTHIGAGSRLWANVSIYHEVVIGQNCLIQSGTVIGADGFGYANDRGNWVKIPQLGSVHIGDRVEIGACTTIDRGALDNTIIGNGVIIDNQCQIAHNVVIGDNTAVAGGVIMAGSLKVGRYCMIGGASVINGHMEICDKVTITGMGMVMRPITEPGLYSSGIPLQPNKMWRKTAALVMNIDGINKRLKAVERKIDKE</sequence>
<evidence type="ECO:0000255" key="1">
    <source>
        <dbReference type="HAMAP-Rule" id="MF_00523"/>
    </source>
</evidence>
<protein>
    <recommendedName>
        <fullName evidence="1">UDP-3-O-(3-hydroxymyristoyl)glucosamine N-acyltransferase</fullName>
        <shortName evidence="1">UDP-3-O-(3-OHC14)-GlcN N-acyltransferase</shortName>
        <ecNumber evidence="1">2.3.1.191</ecNumber>
    </recommendedName>
    <alternativeName>
        <fullName evidence="1">UDP-3-O-(3-hydroxytetradecanoyl)glucosamine N-acyltransferase</fullName>
    </alternativeName>
</protein>
<reference key="1">
    <citation type="journal article" date="2006" name="J. Bacteriol.">
        <title>Complete genome sequence of Yersinia pestis strains Antiqua and Nepal516: evidence of gene reduction in an emerging pathogen.</title>
        <authorList>
            <person name="Chain P.S.G."/>
            <person name="Hu P."/>
            <person name="Malfatti S.A."/>
            <person name="Radnedge L."/>
            <person name="Larimer F."/>
            <person name="Vergez L.M."/>
            <person name="Worsham P."/>
            <person name="Chu M.C."/>
            <person name="Andersen G.L."/>
        </authorList>
    </citation>
    <scope>NUCLEOTIDE SEQUENCE [LARGE SCALE GENOMIC DNA]</scope>
    <source>
        <strain>Nepal516</strain>
    </source>
</reference>
<reference key="2">
    <citation type="submission" date="2009-04" db="EMBL/GenBank/DDBJ databases">
        <title>Yersinia pestis Nepal516A whole genome shotgun sequencing project.</title>
        <authorList>
            <person name="Plunkett G. III"/>
            <person name="Anderson B.D."/>
            <person name="Baumler D.J."/>
            <person name="Burland V."/>
            <person name="Cabot E.L."/>
            <person name="Glasner J.D."/>
            <person name="Mau B."/>
            <person name="Neeno-Eckwall E."/>
            <person name="Perna N.T."/>
            <person name="Munk A.C."/>
            <person name="Tapia R."/>
            <person name="Green L.D."/>
            <person name="Rogers Y.C."/>
            <person name="Detter J.C."/>
            <person name="Bruce D.C."/>
            <person name="Brettin T.S."/>
        </authorList>
    </citation>
    <scope>NUCLEOTIDE SEQUENCE [LARGE SCALE GENOMIC DNA]</scope>
    <source>
        <strain>Nepal516</strain>
    </source>
</reference>
<accession>Q1CFF7</accession>
<accession>C4GWX2</accession>
<name>LPXD_YERPN</name>
<gene>
    <name evidence="1" type="primary">lpxD</name>
    <name type="ordered locus">YPN_2946</name>
    <name type="ORF">YP516_3336</name>
</gene>
<keyword id="KW-0012">Acyltransferase</keyword>
<keyword id="KW-0441">Lipid A biosynthesis</keyword>
<keyword id="KW-0444">Lipid biosynthesis</keyword>
<keyword id="KW-0443">Lipid metabolism</keyword>
<keyword id="KW-0677">Repeat</keyword>
<keyword id="KW-0808">Transferase</keyword>
<feature type="chain" id="PRO_0000264462" description="UDP-3-O-(3-hydroxymyristoyl)glucosamine N-acyltransferase">
    <location>
        <begin position="1"/>
        <end position="340"/>
    </location>
</feature>
<feature type="active site" description="Proton acceptor" evidence="1">
    <location>
        <position position="239"/>
    </location>
</feature>
<proteinExistence type="inferred from homology"/>
<dbReference type="EC" id="2.3.1.191" evidence="1"/>
<dbReference type="EMBL" id="CP000305">
    <property type="protein sequence ID" value="ABG19273.1"/>
    <property type="molecule type" value="Genomic_DNA"/>
</dbReference>
<dbReference type="EMBL" id="ACNQ01000017">
    <property type="protein sequence ID" value="EEO75422.1"/>
    <property type="molecule type" value="Genomic_DNA"/>
</dbReference>
<dbReference type="RefSeq" id="WP_002212141.1">
    <property type="nucleotide sequence ID" value="NZ_ACNQ01000017.1"/>
</dbReference>
<dbReference type="SMR" id="Q1CFF7"/>
<dbReference type="GeneID" id="57977507"/>
<dbReference type="KEGG" id="ypn:YPN_2946"/>
<dbReference type="HOGENOM" id="CLU_049865_0_1_6"/>
<dbReference type="UniPathway" id="UPA00359">
    <property type="reaction ID" value="UER00479"/>
</dbReference>
<dbReference type="Proteomes" id="UP000008936">
    <property type="component" value="Chromosome"/>
</dbReference>
<dbReference type="GO" id="GO:0016020">
    <property type="term" value="C:membrane"/>
    <property type="evidence" value="ECO:0007669"/>
    <property type="project" value="GOC"/>
</dbReference>
<dbReference type="GO" id="GO:0016410">
    <property type="term" value="F:N-acyltransferase activity"/>
    <property type="evidence" value="ECO:0007669"/>
    <property type="project" value="InterPro"/>
</dbReference>
<dbReference type="GO" id="GO:0103118">
    <property type="term" value="F:UDP-3-O-(R-3-hydroxymyristoyl)-glucosamine N-acyltransferase activity"/>
    <property type="evidence" value="ECO:0007669"/>
    <property type="project" value="UniProtKB-EC"/>
</dbReference>
<dbReference type="GO" id="GO:0009245">
    <property type="term" value="P:lipid A biosynthetic process"/>
    <property type="evidence" value="ECO:0007669"/>
    <property type="project" value="UniProtKB-UniRule"/>
</dbReference>
<dbReference type="CDD" id="cd03352">
    <property type="entry name" value="LbH_LpxD"/>
    <property type="match status" value="1"/>
</dbReference>
<dbReference type="FunFam" id="2.160.10.10:FF:000005">
    <property type="entry name" value="UDP-3-O-(3-hydroxymyristoyl)glucosamine N-acyltransferase"/>
    <property type="match status" value="1"/>
</dbReference>
<dbReference type="Gene3D" id="1.20.5.170">
    <property type="match status" value="1"/>
</dbReference>
<dbReference type="Gene3D" id="2.160.10.10">
    <property type="entry name" value="Hexapeptide repeat proteins"/>
    <property type="match status" value="1"/>
</dbReference>
<dbReference type="Gene3D" id="3.40.1390.10">
    <property type="entry name" value="MurE/MurF, N-terminal domain"/>
    <property type="match status" value="1"/>
</dbReference>
<dbReference type="HAMAP" id="MF_00523">
    <property type="entry name" value="LpxD"/>
    <property type="match status" value="1"/>
</dbReference>
<dbReference type="InterPro" id="IPR001451">
    <property type="entry name" value="Hexapep"/>
</dbReference>
<dbReference type="InterPro" id="IPR018357">
    <property type="entry name" value="Hexapep_transf_CS"/>
</dbReference>
<dbReference type="InterPro" id="IPR007691">
    <property type="entry name" value="LpxD"/>
</dbReference>
<dbReference type="InterPro" id="IPR011004">
    <property type="entry name" value="Trimer_LpxA-like_sf"/>
</dbReference>
<dbReference type="InterPro" id="IPR020573">
    <property type="entry name" value="UDP_GlcNAc_AcTrfase_non-rep"/>
</dbReference>
<dbReference type="NCBIfam" id="TIGR01853">
    <property type="entry name" value="lipid_A_lpxD"/>
    <property type="match status" value="1"/>
</dbReference>
<dbReference type="NCBIfam" id="NF002060">
    <property type="entry name" value="PRK00892.1"/>
    <property type="match status" value="1"/>
</dbReference>
<dbReference type="PANTHER" id="PTHR43378">
    <property type="entry name" value="UDP-3-O-ACYLGLUCOSAMINE N-ACYLTRANSFERASE"/>
    <property type="match status" value="1"/>
</dbReference>
<dbReference type="PANTHER" id="PTHR43378:SF2">
    <property type="entry name" value="UDP-3-O-ACYLGLUCOSAMINE N-ACYLTRANSFERASE 1, MITOCHONDRIAL-RELATED"/>
    <property type="match status" value="1"/>
</dbReference>
<dbReference type="Pfam" id="PF00132">
    <property type="entry name" value="Hexapep"/>
    <property type="match status" value="3"/>
</dbReference>
<dbReference type="Pfam" id="PF04613">
    <property type="entry name" value="LpxD"/>
    <property type="match status" value="1"/>
</dbReference>
<dbReference type="SUPFAM" id="SSF51161">
    <property type="entry name" value="Trimeric LpxA-like enzymes"/>
    <property type="match status" value="1"/>
</dbReference>
<dbReference type="PROSITE" id="PS00101">
    <property type="entry name" value="HEXAPEP_TRANSFERASES"/>
    <property type="match status" value="3"/>
</dbReference>
<organism>
    <name type="scientific">Yersinia pestis bv. Antiqua (strain Nepal516)</name>
    <dbReference type="NCBI Taxonomy" id="377628"/>
    <lineage>
        <taxon>Bacteria</taxon>
        <taxon>Pseudomonadati</taxon>
        <taxon>Pseudomonadota</taxon>
        <taxon>Gammaproteobacteria</taxon>
        <taxon>Enterobacterales</taxon>
        <taxon>Yersiniaceae</taxon>
        <taxon>Yersinia</taxon>
    </lineage>
</organism>
<comment type="function">
    <text evidence="1">Catalyzes the N-acylation of UDP-3-O-(hydroxytetradecanoyl)glucosamine using 3-hydroxytetradecanoyl-ACP as the acyl donor. Is involved in the biosynthesis of lipid A, a phosphorylated glycolipid that anchors the lipopolysaccharide to the outer membrane of the cell.</text>
</comment>
<comment type="catalytic activity">
    <reaction evidence="1">
        <text>a UDP-3-O-[(3R)-3-hydroxyacyl]-alpha-D-glucosamine + a (3R)-hydroxyacyl-[ACP] = a UDP-2-N,3-O-bis[(3R)-3-hydroxyacyl]-alpha-D-glucosamine + holo-[ACP] + H(+)</text>
        <dbReference type="Rhea" id="RHEA:53836"/>
        <dbReference type="Rhea" id="RHEA-COMP:9685"/>
        <dbReference type="Rhea" id="RHEA-COMP:9945"/>
        <dbReference type="ChEBI" id="CHEBI:15378"/>
        <dbReference type="ChEBI" id="CHEBI:64479"/>
        <dbReference type="ChEBI" id="CHEBI:78827"/>
        <dbReference type="ChEBI" id="CHEBI:137740"/>
        <dbReference type="ChEBI" id="CHEBI:137748"/>
        <dbReference type="EC" id="2.3.1.191"/>
    </reaction>
</comment>
<comment type="catalytic activity">
    <reaction evidence="1">
        <text>UDP-3-O-[(3R)-3-hydroxytetradecanoyl]-alpha-D-glucosamine + (3R)-hydroxytetradecanoyl-[ACP] = UDP-2-N,3-O-bis[(3R)-3-hydroxytetradecanoyl]-alpha-D-glucosamine + holo-[ACP] + H(+)</text>
        <dbReference type="Rhea" id="RHEA:17817"/>
        <dbReference type="Rhea" id="RHEA-COMP:9646"/>
        <dbReference type="Rhea" id="RHEA-COMP:9685"/>
        <dbReference type="ChEBI" id="CHEBI:15378"/>
        <dbReference type="ChEBI" id="CHEBI:64479"/>
        <dbReference type="ChEBI" id="CHEBI:71573"/>
        <dbReference type="ChEBI" id="CHEBI:78474"/>
        <dbReference type="ChEBI" id="CHEBI:78847"/>
    </reaction>
</comment>
<comment type="pathway">
    <text evidence="1">Glycolipid biosynthesis; lipid IV(A) biosynthesis; lipid IV(A) from (3R)-3-hydroxytetradecanoyl-[acyl-carrier-protein] and UDP-N-acetyl-alpha-D-glucosamine: step 3/6.</text>
</comment>
<comment type="subunit">
    <text evidence="1">Homotrimer.</text>
</comment>
<comment type="similarity">
    <text evidence="1">Belongs to the transferase hexapeptide repeat family. LpxD subfamily.</text>
</comment>